<reference key="1">
    <citation type="journal article" date="1999" name="Plant J.">
        <title>Molecular cloning and functional expression of codeinone reductase: the penultimate enzyme in morphine biosynthesis in the opium poppy Papaver somniferum.</title>
        <authorList>
            <person name="Unterlinner B."/>
            <person name="Lenz R."/>
            <person name="Kutchan T.M."/>
        </authorList>
    </citation>
    <scope>NUCLEOTIDE SEQUENCE [MRNA]</scope>
    <scope>PROTEIN SEQUENCE OF 130-135; 172-177; 233-243 AND 245-248</scope>
    <scope>FUNCTION</scope>
    <scope>TISSUE SPECIFICITY</scope>
    <scope>BIOPHYSICOCHEMICAL PROPERTIES</scope>
    <scope>CATALYTIC ACTIVITY</scope>
    <scope>PATHWAY</scope>
</reference>
<reference key="2">
    <citation type="journal article" date="2018" name="Science">
        <title>The opium poppy genome and morphinan production.</title>
        <authorList>
            <person name="Guo L."/>
            <person name="Winzer T."/>
            <person name="Yang X."/>
            <person name="Li Y."/>
            <person name="Ning Z."/>
            <person name="He Z."/>
            <person name="Teodor R."/>
            <person name="Lu Y."/>
            <person name="Bowser T.A."/>
            <person name="Graham I.A."/>
            <person name="Ye K."/>
        </authorList>
    </citation>
    <scope>NUCLEOTIDE SEQUENCE [LARGE SCALE GENOMIC DNA]</scope>
    <source>
        <strain>cv. HN1</strain>
        <tissue>Leaf</tissue>
    </source>
</reference>
<reference key="3">
    <citation type="journal article" date="2000" name="Electrophoresis">
        <title>Characterization of proteins in latex of the opium poppy (Papaver somniferum) using two-dimensional gel electrophoresis and microsequencing.</title>
        <authorList>
            <person name="Decker G."/>
            <person name="Wanner G."/>
            <person name="Zenk M.H."/>
            <person name="Lottspeich F."/>
        </authorList>
    </citation>
    <scope>IDENTIFICATION BY MASS SPECTROMETRY</scope>
    <scope>SUBCELLULAR LOCATION</scope>
    <scope>TISSUE SPECIFICITY</scope>
</reference>
<reference key="4">
    <citation type="journal article" date="2018" name="Plant J.">
        <title>Codeinone reductase isoforms with differential stability, efficiency and product selectivity in opium poppy.</title>
        <authorList>
            <person name="Dastmalchi M."/>
            <person name="Chang L."/>
            <person name="Torres M.A."/>
            <person name="Ng K.K.S."/>
            <person name="Facchini P.J."/>
        </authorList>
    </citation>
    <scope>NUCLEOTIDE SEQUENCE [MRNA]</scope>
    <scope>FUNCTION</scope>
    <scope>MUTAGENESIS OF ASN-41; LEU-129 AND SER-279</scope>
    <scope>CATALYTIC ACTIVITY</scope>
    <scope>BIOTECHNOLOGY</scope>
    <scope>PATHWAY</scope>
    <source>
        <strain>cv. Bea's Choice</strain>
    </source>
</reference>
<reference key="5">
    <citation type="journal article" date="2003" name="Plant Cell">
        <title>A tale of three cell types: alkaloid biosynthesis is localized to sieve elements in opium poppy.</title>
        <authorList>
            <person name="Bird D.A."/>
            <person name="Franceschi V.R."/>
            <person name="Facchini P.J."/>
        </authorList>
    </citation>
    <scope>TISSUE SPECIFICITY</scope>
    <scope>SUBCELLULAR LOCATION</scope>
</reference>
<reference key="6">
    <citation type="journal article" date="2004" name="Nat. Biotechnol.">
        <title>RNAi-mediated replacement of morphine with the nonnarcotic alkaloid reticuline in opium poppy.</title>
        <authorList>
            <person name="Allen R.S."/>
            <person name="Millgate A.G."/>
            <person name="Chitty J.A."/>
            <person name="Thisleton J."/>
            <person name="Miller J.A."/>
            <person name="Fist A.J."/>
            <person name="Gerlach W.L."/>
            <person name="Larkin P.J."/>
        </authorList>
    </citation>
    <scope>FUNCTION</scope>
    <scope>DISRUPTION PHENOTYPE</scope>
</reference>
<reference key="7">
    <citation type="journal article" date="2004" name="Proc. Natl. Acad. Sci. U.S.A.">
        <title>The roles of latex and the vascular bundle in morphine biosynthesis in the opium poppy, Papaver somniferum.</title>
        <authorList>
            <person name="Weid M."/>
            <person name="Ziegler J."/>
            <person name="Kutchan T.M."/>
        </authorList>
    </citation>
    <scope>TISSUE SPECIFICITY</scope>
</reference>
<reference key="8">
    <citation type="journal article" date="2006" name="Plant J.">
        <title>The role of phloem sieve elements and laticifers in the biosynthesis and accumulation of alkaloids in opium poppy.</title>
        <authorList>
            <person name="Samanani N."/>
            <person name="Alcantara J."/>
            <person name="Bourgault R."/>
            <person name="Zulak K.G."/>
            <person name="Facchini P.J."/>
        </authorList>
    </citation>
    <scope>DEVELOPMENTAL STAGE</scope>
    <source>
        <strain>cv. Louisiana</strain>
        <strain>cv. Marianne</strain>
    </source>
</reference>
<reference key="9">
    <citation type="journal article" date="2012" name="Plant J.">
        <title>Systematic knockdown of morphine pathway enzymes in opium poppy using virus-induced gene silencing.</title>
        <authorList>
            <person name="Wijekoon C.P."/>
            <person name="Facchini P.J."/>
        </authorList>
    </citation>
    <scope>FUNCTION</scope>
    <scope>DISRUPTION PHENOTYPE</scope>
    <scope>CATALYTIC ACTIVITY</scope>
</reference>
<reference key="10">
    <citation type="journal article" date="2018" name="J. Biosci.">
        <title>Spatiotemporal oscillations of morphinan alkaloids in opium poppy.</title>
        <authorList>
            <person name="Rezaei M."/>
            <person name="Naghavi M.R."/>
            <person name="Hosseinzadeh A."/>
            <person name="Abasi A."/>
            <person name="Nasiri J."/>
        </authorList>
    </citation>
    <scope>TISSUE SPECIFICITY</scope>
    <scope>DEVELOPMENTAL STAGE</scope>
</reference>
<gene>
    <name evidence="14" type="primary">COR1.2</name>
</gene>
<organism>
    <name type="scientific">Papaver somniferum</name>
    <name type="common">Opium poppy</name>
    <dbReference type="NCBI Taxonomy" id="3469"/>
    <lineage>
        <taxon>Eukaryota</taxon>
        <taxon>Viridiplantae</taxon>
        <taxon>Streptophyta</taxon>
        <taxon>Embryophyta</taxon>
        <taxon>Tracheophyta</taxon>
        <taxon>Spermatophyta</taxon>
        <taxon>Magnoliopsida</taxon>
        <taxon>Ranunculales</taxon>
        <taxon>Papaveraceae</taxon>
        <taxon>Papaveroideae</taxon>
        <taxon>Papaver</taxon>
    </lineage>
</organism>
<sequence length="321" mass="35705">MESNGVPMITLSSGIRMPALGMGTVETMEKGTEREKLAFLNAIEVGYRHFDTAAAYQSEECLGEAIAEALQLGLIKSRDELFITSKLWCADAHADLVLPALQNSLRNLKLEYLDLYLIHHPVSLKPGKLVNEIPKDHILPMDYKSVWAAMEECQTLGFTRAIGVSNFSCKKLQELMATAKIPPVVNQVEMSPTLHQKNLREYCKANNIMITAHSVLGAIGAPWGSNAVMDSKVLHQIAVARGKSVAQVSMRWVYQQGASLVVKSFNEARMKENLKIFDSELTAEDMEKISEIPQSRTSSADFLLSPTGPFKTEEEFWDEKD</sequence>
<dbReference type="EC" id="1.1.1.247" evidence="5 12"/>
<dbReference type="EMBL" id="PUWZ01000000">
    <property type="status" value="NOT_ANNOTATED_CDS"/>
    <property type="molecule type" value="Genomic_DNA"/>
</dbReference>
<dbReference type="EMBL" id="AF108433">
    <property type="protein sequence ID" value="AAF13737.1"/>
    <property type="molecule type" value="mRNA"/>
</dbReference>
<dbReference type="SMR" id="Q9SQ69"/>
<dbReference type="UniPathway" id="UPA00852"/>
<dbReference type="Proteomes" id="UP000316621">
    <property type="component" value="Unassembled WGS sequence"/>
</dbReference>
<dbReference type="GO" id="GO:0005829">
    <property type="term" value="C:cytosol"/>
    <property type="evidence" value="ECO:0000314"/>
    <property type="project" value="UniProtKB"/>
</dbReference>
<dbReference type="GO" id="GO:0047036">
    <property type="term" value="F:codeinone reductase (NADPH) activity"/>
    <property type="evidence" value="ECO:0000314"/>
    <property type="project" value="UniProtKB"/>
</dbReference>
<dbReference type="GO" id="GO:0016491">
    <property type="term" value="F:oxidoreductase activity"/>
    <property type="evidence" value="ECO:0000314"/>
    <property type="project" value="UniProtKB"/>
</dbReference>
<dbReference type="GO" id="GO:0009820">
    <property type="term" value="P:alkaloid metabolic process"/>
    <property type="evidence" value="ECO:0007669"/>
    <property type="project" value="UniProtKB-KW"/>
</dbReference>
<dbReference type="CDD" id="cd19124">
    <property type="entry name" value="AKR_AKR4A_4B"/>
    <property type="match status" value="1"/>
</dbReference>
<dbReference type="FunFam" id="3.20.20.100:FF:000013">
    <property type="entry name" value="NADPH-dependent codeinone reductase 1-1"/>
    <property type="match status" value="1"/>
</dbReference>
<dbReference type="Gene3D" id="3.20.20.100">
    <property type="entry name" value="NADP-dependent oxidoreductase domain"/>
    <property type="match status" value="1"/>
</dbReference>
<dbReference type="InterPro" id="IPR020471">
    <property type="entry name" value="AKR"/>
</dbReference>
<dbReference type="InterPro" id="IPR044497">
    <property type="entry name" value="AKR4A/B"/>
</dbReference>
<dbReference type="InterPro" id="IPR018170">
    <property type="entry name" value="Aldo/ket_reductase_CS"/>
</dbReference>
<dbReference type="InterPro" id="IPR023210">
    <property type="entry name" value="NADP_OxRdtase_dom"/>
</dbReference>
<dbReference type="InterPro" id="IPR036812">
    <property type="entry name" value="NADP_OxRdtase_dom_sf"/>
</dbReference>
<dbReference type="PANTHER" id="PTHR11732">
    <property type="entry name" value="ALDO/KETO REDUCTASE"/>
    <property type="match status" value="1"/>
</dbReference>
<dbReference type="Pfam" id="PF00248">
    <property type="entry name" value="Aldo_ket_red"/>
    <property type="match status" value="1"/>
</dbReference>
<dbReference type="PIRSF" id="PIRSF000097">
    <property type="entry name" value="AKR"/>
    <property type="match status" value="1"/>
</dbReference>
<dbReference type="PRINTS" id="PR00069">
    <property type="entry name" value="ALDKETRDTASE"/>
</dbReference>
<dbReference type="SUPFAM" id="SSF51430">
    <property type="entry name" value="NAD(P)-linked oxidoreductase"/>
    <property type="match status" value="1"/>
</dbReference>
<dbReference type="PROSITE" id="PS00798">
    <property type="entry name" value="ALDOKETO_REDUCTASE_1"/>
    <property type="match status" value="1"/>
</dbReference>
<dbReference type="PROSITE" id="PS00062">
    <property type="entry name" value="ALDOKETO_REDUCTASE_2"/>
    <property type="match status" value="1"/>
</dbReference>
<dbReference type="PROSITE" id="PS00063">
    <property type="entry name" value="ALDOKETO_REDUCTASE_3"/>
    <property type="match status" value="1"/>
</dbReference>
<keyword id="KW-0017">Alkaloid metabolism</keyword>
<keyword id="KW-0963">Cytoplasm</keyword>
<keyword id="KW-0903">Direct protein sequencing</keyword>
<keyword id="KW-0521">NADP</keyword>
<keyword id="KW-0560">Oxidoreductase</keyword>
<keyword id="KW-1185">Reference proteome</keyword>
<proteinExistence type="evidence at protein level"/>
<protein>
    <recommendedName>
        <fullName evidence="14">NADPH-dependent codeinone reductase 1-2</fullName>
        <shortName evidence="15">PsCor1.2</shortName>
        <ecNumber evidence="5 12">1.1.1.247</ecNumber>
    </recommendedName>
</protein>
<feature type="chain" id="PRO_0000418592" description="NADPH-dependent codeinone reductase 1-2">
    <location>
        <begin position="1"/>
        <end position="321"/>
    </location>
</feature>
<feature type="region of interest" description="Disordered" evidence="4">
    <location>
        <begin position="299"/>
        <end position="321"/>
    </location>
</feature>
<feature type="active site" description="Proton donor" evidence="1">
    <location>
        <position position="56"/>
    </location>
</feature>
<feature type="active site" description="Proton donor" evidence="2">
    <location>
        <position position="119"/>
    </location>
</feature>
<feature type="binding site" evidence="2">
    <location>
        <position position="27"/>
    </location>
    <ligand>
        <name>NADPH</name>
        <dbReference type="ChEBI" id="CHEBI:57783"/>
    </ligand>
</feature>
<feature type="binding site" evidence="2">
    <location>
        <position position="51"/>
    </location>
    <ligand>
        <name>NADPH</name>
        <dbReference type="ChEBI" id="CHEBI:57783"/>
    </ligand>
</feature>
<feature type="binding site" evidence="1">
    <location>
        <position position="119"/>
    </location>
    <ligand>
        <name>substrate</name>
    </ligand>
</feature>
<feature type="binding site" evidence="2">
    <location>
        <position position="165"/>
    </location>
    <ligand>
        <name>NADPH</name>
        <dbReference type="ChEBI" id="CHEBI:57783"/>
    </ligand>
</feature>
<feature type="binding site" evidence="2">
    <location>
        <position position="187"/>
    </location>
    <ligand>
        <name>NADPH</name>
        <dbReference type="ChEBI" id="CHEBI:57783"/>
    </ligand>
</feature>
<feature type="binding site" evidence="2">
    <location>
        <position position="214"/>
    </location>
    <ligand>
        <name>NADPH</name>
        <dbReference type="ChEBI" id="CHEBI:57783"/>
    </ligand>
</feature>
<feature type="binding site" evidence="2">
    <location>
        <position position="216"/>
    </location>
    <ligand>
        <name>NADPH</name>
        <dbReference type="ChEBI" id="CHEBI:57783"/>
    </ligand>
</feature>
<feature type="binding site" evidence="2">
    <location>
        <position position="264"/>
    </location>
    <ligand>
        <name>NADPH</name>
        <dbReference type="ChEBI" id="CHEBI:57783"/>
    </ligand>
</feature>
<feature type="binding site" evidence="2">
    <location>
        <position position="269"/>
    </location>
    <ligand>
        <name>NADPH</name>
        <dbReference type="ChEBI" id="CHEBI:57783"/>
    </ligand>
</feature>
<feature type="site" description="Lowers pKa of active site Tyr" evidence="2">
    <location>
        <position position="86"/>
    </location>
</feature>
<feature type="mutagenesis site" description="Increased neopine yield and enhanced velocities for both forward and reverse reactions." evidence="12">
    <original>N</original>
    <variation>K</variation>
    <location>
        <position position="41"/>
    </location>
</feature>
<feature type="mutagenesis site" description="Increased neopine yield and enhanced velocities for both forward and reverse reactions." evidence="12">
    <original>L</original>
    <variation>F</variation>
    <location>
        <position position="129"/>
    </location>
</feature>
<feature type="mutagenesis site" description="Increased neopine yield and enhanced velocities for both forward and reverse reactions." evidence="12">
    <original>S</original>
    <variation>W</variation>
    <location>
        <position position="279"/>
    </location>
</feature>
<comment type="function">
    <text evidence="3 5 9 11 12">NADPH-dependent codeinone reductase involved in biosynthesis of morphinan-type benzylisoquinoline and opiate alkaloids natural products (PubMed:10417697, PubMed:15543134, PubMed:29779229). Reduces codeinone to codeine in the penultimate step in morphine biosynthesis (PubMed:10417697, PubMed:15543134, PubMed:22098111, PubMed:29779229). Can use morphinone, hydrocodone and hydromorphone as substrate during reductive reaction with NADPH as cofactor, and morphine and dihydrocodeine as substrate during oxidative reaction with NADP as cofactor (PubMed:10417697). Converts morphinone to morphine, and neomorphinone to neomorphine (By similarity). Reduces irreversibly neopinone, a spontaneous isomer of codeinone, to neopine; in planta, neopine levels are limited to low levels (PubMed:29779229).</text>
</comment>
<comment type="catalytic activity">
    <reaction evidence="5 11 12">
        <text>codeine + NADP(+) = codeinone + NADPH + H(+)</text>
        <dbReference type="Rhea" id="RHEA:19209"/>
        <dbReference type="ChEBI" id="CHEBI:15378"/>
        <dbReference type="ChEBI" id="CHEBI:57783"/>
        <dbReference type="ChEBI" id="CHEBI:57871"/>
        <dbReference type="ChEBI" id="CHEBI:58349"/>
        <dbReference type="ChEBI" id="CHEBI:58473"/>
        <dbReference type="EC" id="1.1.1.247"/>
    </reaction>
    <physiologicalReaction direction="left-to-right" evidence="5 12">
        <dbReference type="Rhea" id="RHEA:19210"/>
    </physiologicalReaction>
    <physiologicalReaction direction="right-to-left" evidence="5 12">
        <dbReference type="Rhea" id="RHEA:19211"/>
    </physiologicalReaction>
</comment>
<comment type="catalytic activity">
    <reaction evidence="12">
        <text>neopine + NADP(+) = neopinone + NADPH + H(+)</text>
        <dbReference type="Rhea" id="RHEA:75135"/>
        <dbReference type="ChEBI" id="CHEBI:15378"/>
        <dbReference type="ChEBI" id="CHEBI:57783"/>
        <dbReference type="ChEBI" id="CHEBI:58349"/>
        <dbReference type="ChEBI" id="CHEBI:59950"/>
        <dbReference type="ChEBI" id="CHEBI:194190"/>
        <dbReference type="EC" id="1.1.1.247"/>
    </reaction>
    <physiologicalReaction direction="right-to-left" evidence="12">
        <dbReference type="Rhea" id="RHEA:75137"/>
    </physiologicalReaction>
</comment>
<comment type="catalytic activity">
    <reaction evidence="12">
        <text>morphine + NADP(+) = morphinone + NADPH + H(+)</text>
        <dbReference type="Rhea" id="RHEA:14321"/>
        <dbReference type="ChEBI" id="CHEBI:15378"/>
        <dbReference type="ChEBI" id="CHEBI:57728"/>
        <dbReference type="ChEBI" id="CHEBI:57783"/>
        <dbReference type="ChEBI" id="CHEBI:58097"/>
        <dbReference type="ChEBI" id="CHEBI:58349"/>
    </reaction>
    <physiologicalReaction direction="left-to-right" evidence="12">
        <dbReference type="Rhea" id="RHEA:14322"/>
    </physiologicalReaction>
    <physiologicalReaction direction="right-to-left" evidence="12">
        <dbReference type="Rhea" id="RHEA:14323"/>
    </physiologicalReaction>
</comment>
<comment type="catalytic activity">
    <reaction evidence="12">
        <text>neomorphine + NADP(+) = neomorphinone + NADPH + H(+)</text>
        <dbReference type="Rhea" id="RHEA:75971"/>
        <dbReference type="ChEBI" id="CHEBI:15378"/>
        <dbReference type="ChEBI" id="CHEBI:57783"/>
        <dbReference type="ChEBI" id="CHEBI:58349"/>
        <dbReference type="ChEBI" id="CHEBI:194188"/>
        <dbReference type="ChEBI" id="CHEBI:194513"/>
    </reaction>
    <physiologicalReaction direction="right-to-left" evidence="12">
        <dbReference type="Rhea" id="RHEA:75973"/>
    </physiologicalReaction>
</comment>
<comment type="biophysicochemical properties">
    <kinetics>
        <KM evidence="5">200 uM for codeine (at pH 9.0 and 30 degrees Celsius)</KM>
        <KM evidence="5">62 uM for codeinone (at pH 9.0 and 30 degrees Celsius)</KM>
        <KM evidence="5">220 uM for NADPH (at pH 9.0 and 30 degrees Celsius)</KM>
        <KM evidence="5">58 uM for NADP (at pH 9.0 and 30 degrees Celsius)</KM>
    </kinetics>
    <phDependence>
        <text evidence="5">Optimum pH is 6.8 for reduction (forward reaction) and 9.0 for oxidation (reverse reaction).</text>
    </phDependence>
    <temperatureDependence>
        <text evidence="5">Optimum temperature is 28 degrees Celsius for reduction (forward reaction) and 30 degrees Celsius for reduction (reverse reaction).</text>
    </temperatureDependence>
</comment>
<comment type="pathway">
    <text evidence="5 12">Alkaloid biosynthesis; morphine biosynthesis.</text>
</comment>
<comment type="subcellular location">
    <subcellularLocation>
        <location evidence="6">Cytoplasm</location>
        <location evidence="6">Cytosol</location>
    </subcellularLocation>
    <text evidence="6 7">Present in the cytosolic part of laticifer cells that secrete latex (PubMed:11079569). Localized to the parietal region of the sieve element cytoplasm (PubMed:14508000).</text>
</comment>
<comment type="tissue specificity">
    <text evidence="5 6 7 8 13">Latex secreting cells (laticifer cells). Expressed constitutively in all organs with highest levels in capsules (PubMed:15353584, PubMed:29872026). Restricted to the parietal region of sieve elements adjacent or proximal to laticifers in roots, stems, leaves and carpels (PubMed:14508000).</text>
</comment>
<comment type="developmental stage">
    <text evidence="10 13">Increases rapidly between 1 and 4 days after seed germination (PubMed:16813579). In roots, accumulates transiently during flower buds initiation (PubMed:29872026). In leaves, mainly observed after budding (PubMed:29872026). High levels in stems and capsules (walls and content), especially after flowering (PubMed:29872026).</text>
</comment>
<comment type="disruption phenotype">
    <text evidence="9 11">Plants silenced for all codeinone reductase proteins accumulate the precursor alkaloid (S)-reticuline at the expense of morphine, codeine, oripavine and thebaine.</text>
</comment>
<comment type="biotechnology">
    <text evidence="12">In yeast (Saccharomyces cerevisiae) engineered to produce opiate alkaloids, the expression of COR proteins leads to the accumulation of neopine and neomorphine as major products.</text>
</comment>
<comment type="similarity">
    <text evidence="15">Belongs to the aldo/keto reductase family.</text>
</comment>
<evidence type="ECO:0000250" key="1">
    <source>
        <dbReference type="UniProtKB" id="P06632"/>
    </source>
</evidence>
<evidence type="ECO:0000250" key="2">
    <source>
        <dbReference type="UniProtKB" id="Q76L36"/>
    </source>
</evidence>
<evidence type="ECO:0000250" key="3">
    <source>
        <dbReference type="UniProtKB" id="Q9SQ68"/>
    </source>
</evidence>
<evidence type="ECO:0000256" key="4">
    <source>
        <dbReference type="SAM" id="MobiDB-lite"/>
    </source>
</evidence>
<evidence type="ECO:0000269" key="5">
    <source>
    </source>
</evidence>
<evidence type="ECO:0000269" key="6">
    <source>
    </source>
</evidence>
<evidence type="ECO:0000269" key="7">
    <source>
    </source>
</evidence>
<evidence type="ECO:0000269" key="8">
    <source>
    </source>
</evidence>
<evidence type="ECO:0000269" key="9">
    <source>
    </source>
</evidence>
<evidence type="ECO:0000269" key="10">
    <source>
    </source>
</evidence>
<evidence type="ECO:0000269" key="11">
    <source>
    </source>
</evidence>
<evidence type="ECO:0000269" key="12">
    <source>
    </source>
</evidence>
<evidence type="ECO:0000269" key="13">
    <source>
    </source>
</evidence>
<evidence type="ECO:0000303" key="14">
    <source>
    </source>
</evidence>
<evidence type="ECO:0000305" key="15"/>
<name>COR12_PAPSO</name>
<accession>Q9SQ69</accession>